<protein>
    <recommendedName>
        <fullName evidence="1">Catabolic 3-dehydroquinase</fullName>
        <shortName evidence="1">cDHQase</shortName>
        <ecNumber evidence="1">4.2.1.10</ecNumber>
    </recommendedName>
    <alternativeName>
        <fullName evidence="1">3-dehydroquinate dehydratase</fullName>
    </alternativeName>
</protein>
<sequence length="157" mass="16793">MPSQKPTILLLNGPNLNLLGTREPQIYGSTTLSDVQERCLALASSLDVELRHVQSNHEGALVDAIHALRRDLPLAGVVINPGAFTHTSVAIRDALLGVGAPFVELHVSNVHAREAFRHHSYLSDKAVAVICGMGVDGYAVAVEFMAKRLKAQAAAKL</sequence>
<reference key="1">
    <citation type="journal article" date="2005" name="Nature">
        <title>The genome sequence of the rice blast fungus Magnaporthe grisea.</title>
        <authorList>
            <person name="Dean R.A."/>
            <person name="Talbot N.J."/>
            <person name="Ebbole D.J."/>
            <person name="Farman M.L."/>
            <person name="Mitchell T.K."/>
            <person name="Orbach M.J."/>
            <person name="Thon M.R."/>
            <person name="Kulkarni R."/>
            <person name="Xu J.-R."/>
            <person name="Pan H."/>
            <person name="Read N.D."/>
            <person name="Lee Y.-H."/>
            <person name="Carbone I."/>
            <person name="Brown D."/>
            <person name="Oh Y.Y."/>
            <person name="Donofrio N."/>
            <person name="Jeong J.S."/>
            <person name="Soanes D.M."/>
            <person name="Djonovic S."/>
            <person name="Kolomiets E."/>
            <person name="Rehmeyer C."/>
            <person name="Li W."/>
            <person name="Harding M."/>
            <person name="Kim S."/>
            <person name="Lebrun M.-H."/>
            <person name="Bohnert H."/>
            <person name="Coughlan S."/>
            <person name="Butler J."/>
            <person name="Calvo S.E."/>
            <person name="Ma L.-J."/>
            <person name="Nicol R."/>
            <person name="Purcell S."/>
            <person name="Nusbaum C."/>
            <person name="Galagan J.E."/>
            <person name="Birren B.W."/>
        </authorList>
    </citation>
    <scope>NUCLEOTIDE SEQUENCE [LARGE SCALE GENOMIC DNA]</scope>
    <source>
        <strain>70-15 / ATCC MYA-4617 / FGSC 8958</strain>
    </source>
</reference>
<gene>
    <name evidence="1" type="primary">qutE</name>
    <name type="ORF">MGG_07782</name>
</gene>
<evidence type="ECO:0000255" key="1">
    <source>
        <dbReference type="HAMAP-Rule" id="MF_03136"/>
    </source>
</evidence>
<accession>A4QYU7</accession>
<accession>G4N116</accession>
<comment type="function">
    <text evidence="1">Is involved in the catabolism of quinate. Allows the utilization of quinate as carbon source via the beta-ketoadipate pathway.</text>
</comment>
<comment type="catalytic activity">
    <reaction evidence="1">
        <text>3-dehydroquinate = 3-dehydroshikimate + H2O</text>
        <dbReference type="Rhea" id="RHEA:21096"/>
        <dbReference type="ChEBI" id="CHEBI:15377"/>
        <dbReference type="ChEBI" id="CHEBI:16630"/>
        <dbReference type="ChEBI" id="CHEBI:32364"/>
        <dbReference type="EC" id="4.2.1.10"/>
    </reaction>
</comment>
<comment type="pathway">
    <text evidence="1">Aromatic compound metabolism; 3,4-dihydroxybenzoate biosynthesis; 3,4-dihydroxybenzoate from 3-dehydroquinate: step 1/2.</text>
</comment>
<comment type="subunit">
    <text evidence="1">Homododecamer. Adopts a ring-like structure, composed of an arrangement of two hexameric rings stacked on top of one another.</text>
</comment>
<comment type="similarity">
    <text evidence="1">Belongs to the type-II 3-dehydroquinase family.</text>
</comment>
<feature type="chain" id="PRO_0000402366" description="Catabolic 3-dehydroquinase">
    <location>
        <begin position="1"/>
        <end position="157"/>
    </location>
</feature>
<feature type="active site" description="Proton acceptor" evidence="1">
    <location>
        <position position="27"/>
    </location>
</feature>
<feature type="active site" description="Proton donor" evidence="1">
    <location>
        <position position="106"/>
    </location>
</feature>
<feature type="binding site" evidence="1">
    <location>
        <position position="80"/>
    </location>
    <ligand>
        <name>substrate</name>
    </ligand>
</feature>
<feature type="binding site" evidence="1">
    <location>
        <position position="86"/>
    </location>
    <ligand>
        <name>substrate</name>
    </ligand>
</feature>
<feature type="binding site" evidence="1">
    <location>
        <position position="93"/>
    </location>
    <ligand>
        <name>substrate</name>
    </ligand>
</feature>
<feature type="binding site" evidence="1">
    <location>
        <begin position="107"/>
        <end position="108"/>
    </location>
    <ligand>
        <name>substrate</name>
    </ligand>
</feature>
<feature type="binding site" evidence="1">
    <location>
        <position position="117"/>
    </location>
    <ligand>
        <name>substrate</name>
    </ligand>
</feature>
<feature type="site" description="Transition state stabilizer" evidence="1">
    <location>
        <position position="22"/>
    </location>
</feature>
<keyword id="KW-0456">Lyase</keyword>
<keyword id="KW-0672">Quinate metabolism</keyword>
<keyword id="KW-1185">Reference proteome</keyword>
<proteinExistence type="inferred from homology"/>
<dbReference type="EC" id="4.2.1.10" evidence="1"/>
<dbReference type="EMBL" id="CM001233">
    <property type="protein sequence ID" value="EHA53192.1"/>
    <property type="molecule type" value="Genomic_DNA"/>
</dbReference>
<dbReference type="RefSeq" id="XP_003712999.1">
    <property type="nucleotide sequence ID" value="XM_003712951.1"/>
</dbReference>
<dbReference type="SMR" id="A4QYU7"/>
<dbReference type="STRING" id="242507.A4QYU7"/>
<dbReference type="EnsemblFungi" id="MGG_07782T0">
    <property type="protein sequence ID" value="MGG_07782T0"/>
    <property type="gene ID" value="MGG_07782"/>
</dbReference>
<dbReference type="GeneID" id="2683709"/>
<dbReference type="KEGG" id="mgr:MGG_07782"/>
<dbReference type="VEuPathDB" id="FungiDB:MGG_07782"/>
<dbReference type="eggNOG" id="ENOG502S1A9">
    <property type="taxonomic scope" value="Eukaryota"/>
</dbReference>
<dbReference type="HOGENOM" id="CLU_090968_1_0_1"/>
<dbReference type="InParanoid" id="A4QYU7"/>
<dbReference type="OMA" id="AYTHYSY"/>
<dbReference type="OrthoDB" id="8191625at2759"/>
<dbReference type="UniPathway" id="UPA00088">
    <property type="reaction ID" value="UER00178"/>
</dbReference>
<dbReference type="Proteomes" id="UP000009058">
    <property type="component" value="Chromosome 3"/>
</dbReference>
<dbReference type="GO" id="GO:0003855">
    <property type="term" value="F:3-dehydroquinate dehydratase activity"/>
    <property type="evidence" value="ECO:0007669"/>
    <property type="project" value="UniProtKB-UniRule"/>
</dbReference>
<dbReference type="GO" id="GO:0046279">
    <property type="term" value="P:3,4-dihydroxybenzoate biosynthetic process"/>
    <property type="evidence" value="ECO:0007669"/>
    <property type="project" value="UniProtKB-UniRule"/>
</dbReference>
<dbReference type="GO" id="GO:0019631">
    <property type="term" value="P:quinate catabolic process"/>
    <property type="evidence" value="ECO:0007669"/>
    <property type="project" value="TreeGrafter"/>
</dbReference>
<dbReference type="CDD" id="cd00466">
    <property type="entry name" value="DHQase_II"/>
    <property type="match status" value="1"/>
</dbReference>
<dbReference type="Gene3D" id="3.40.50.9100">
    <property type="entry name" value="Dehydroquinase, class II"/>
    <property type="match status" value="1"/>
</dbReference>
<dbReference type="HAMAP" id="MF_00169">
    <property type="entry name" value="AroQ"/>
    <property type="match status" value="1"/>
</dbReference>
<dbReference type="InterPro" id="IPR001874">
    <property type="entry name" value="DHquinase_II"/>
</dbReference>
<dbReference type="InterPro" id="IPR018509">
    <property type="entry name" value="DHquinase_II_CS"/>
</dbReference>
<dbReference type="InterPro" id="IPR036441">
    <property type="entry name" value="DHquinase_II_sf"/>
</dbReference>
<dbReference type="NCBIfam" id="TIGR01088">
    <property type="entry name" value="aroQ"/>
    <property type="match status" value="1"/>
</dbReference>
<dbReference type="NCBIfam" id="NF003804">
    <property type="entry name" value="PRK05395.1-1"/>
    <property type="match status" value="1"/>
</dbReference>
<dbReference type="NCBIfam" id="NF003805">
    <property type="entry name" value="PRK05395.1-2"/>
    <property type="match status" value="1"/>
</dbReference>
<dbReference type="NCBIfam" id="NF003806">
    <property type="entry name" value="PRK05395.1-3"/>
    <property type="match status" value="1"/>
</dbReference>
<dbReference type="NCBIfam" id="NF003807">
    <property type="entry name" value="PRK05395.1-4"/>
    <property type="match status" value="1"/>
</dbReference>
<dbReference type="PANTHER" id="PTHR21272">
    <property type="entry name" value="CATABOLIC 3-DEHYDROQUINASE"/>
    <property type="match status" value="1"/>
</dbReference>
<dbReference type="PANTHER" id="PTHR21272:SF5">
    <property type="entry name" value="CATABOLIC 3-DEHYDROQUINASE"/>
    <property type="match status" value="1"/>
</dbReference>
<dbReference type="Pfam" id="PF01220">
    <property type="entry name" value="DHquinase_II"/>
    <property type="match status" value="1"/>
</dbReference>
<dbReference type="PIRSF" id="PIRSF001399">
    <property type="entry name" value="DHquinase_II"/>
    <property type="match status" value="1"/>
</dbReference>
<dbReference type="SUPFAM" id="SSF52304">
    <property type="entry name" value="Type II 3-dehydroquinate dehydratase"/>
    <property type="match status" value="1"/>
</dbReference>
<dbReference type="PROSITE" id="PS01029">
    <property type="entry name" value="DEHYDROQUINASE_II"/>
    <property type="match status" value="1"/>
</dbReference>
<organism>
    <name type="scientific">Pyricularia oryzae (strain 70-15 / ATCC MYA-4617 / FGSC 8958)</name>
    <name type="common">Rice blast fungus</name>
    <name type="synonym">Magnaporthe oryzae</name>
    <dbReference type="NCBI Taxonomy" id="242507"/>
    <lineage>
        <taxon>Eukaryota</taxon>
        <taxon>Fungi</taxon>
        <taxon>Dikarya</taxon>
        <taxon>Ascomycota</taxon>
        <taxon>Pezizomycotina</taxon>
        <taxon>Sordariomycetes</taxon>
        <taxon>Sordariomycetidae</taxon>
        <taxon>Magnaporthales</taxon>
        <taxon>Pyriculariaceae</taxon>
        <taxon>Pyricularia</taxon>
    </lineage>
</organism>
<name>3DHQ_PYRO7</name>